<dbReference type="EC" id="6.3.1.5" evidence="1"/>
<dbReference type="EMBL" id="CP000002">
    <property type="protein sequence ID" value="AAU21974.1"/>
    <property type="molecule type" value="Genomic_DNA"/>
</dbReference>
<dbReference type="EMBL" id="AE017333">
    <property type="protein sequence ID" value="AAU39328.1"/>
    <property type="molecule type" value="Genomic_DNA"/>
</dbReference>
<dbReference type="RefSeq" id="WP_003178747.1">
    <property type="nucleotide sequence ID" value="NC_006322.1"/>
</dbReference>
<dbReference type="SMR" id="Q65NN6"/>
<dbReference type="STRING" id="279010.BL01706"/>
<dbReference type="GeneID" id="92858669"/>
<dbReference type="KEGG" id="bld:BLi00370"/>
<dbReference type="KEGG" id="bli:BL01706"/>
<dbReference type="eggNOG" id="COG0171">
    <property type="taxonomic scope" value="Bacteria"/>
</dbReference>
<dbReference type="HOGENOM" id="CLU_059327_3_0_9"/>
<dbReference type="UniPathway" id="UPA00253">
    <property type="reaction ID" value="UER00333"/>
</dbReference>
<dbReference type="Proteomes" id="UP000000606">
    <property type="component" value="Chromosome"/>
</dbReference>
<dbReference type="GO" id="GO:0005737">
    <property type="term" value="C:cytoplasm"/>
    <property type="evidence" value="ECO:0007669"/>
    <property type="project" value="InterPro"/>
</dbReference>
<dbReference type="GO" id="GO:0005524">
    <property type="term" value="F:ATP binding"/>
    <property type="evidence" value="ECO:0007669"/>
    <property type="project" value="UniProtKB-UniRule"/>
</dbReference>
<dbReference type="GO" id="GO:0004359">
    <property type="term" value="F:glutaminase activity"/>
    <property type="evidence" value="ECO:0007669"/>
    <property type="project" value="InterPro"/>
</dbReference>
<dbReference type="GO" id="GO:0046872">
    <property type="term" value="F:metal ion binding"/>
    <property type="evidence" value="ECO:0007669"/>
    <property type="project" value="UniProtKB-KW"/>
</dbReference>
<dbReference type="GO" id="GO:0003952">
    <property type="term" value="F:NAD+ synthase (glutamine-hydrolyzing) activity"/>
    <property type="evidence" value="ECO:0007669"/>
    <property type="project" value="InterPro"/>
</dbReference>
<dbReference type="GO" id="GO:0008795">
    <property type="term" value="F:NAD+ synthase activity"/>
    <property type="evidence" value="ECO:0007669"/>
    <property type="project" value="UniProtKB-UniRule"/>
</dbReference>
<dbReference type="GO" id="GO:0009435">
    <property type="term" value="P:NAD biosynthetic process"/>
    <property type="evidence" value="ECO:0007669"/>
    <property type="project" value="UniProtKB-UniRule"/>
</dbReference>
<dbReference type="CDD" id="cd00553">
    <property type="entry name" value="NAD_synthase"/>
    <property type="match status" value="1"/>
</dbReference>
<dbReference type="FunFam" id="3.40.50.620:FF:000015">
    <property type="entry name" value="NH(3)-dependent NAD(+) synthetase"/>
    <property type="match status" value="1"/>
</dbReference>
<dbReference type="Gene3D" id="3.40.50.620">
    <property type="entry name" value="HUPs"/>
    <property type="match status" value="1"/>
</dbReference>
<dbReference type="HAMAP" id="MF_00193">
    <property type="entry name" value="NadE_ammonia_dep"/>
    <property type="match status" value="1"/>
</dbReference>
<dbReference type="InterPro" id="IPR022310">
    <property type="entry name" value="NAD/GMP_synthase"/>
</dbReference>
<dbReference type="InterPro" id="IPR003694">
    <property type="entry name" value="NAD_synthase"/>
</dbReference>
<dbReference type="InterPro" id="IPR022926">
    <property type="entry name" value="NH(3)-dep_NAD(+)_synth"/>
</dbReference>
<dbReference type="InterPro" id="IPR014729">
    <property type="entry name" value="Rossmann-like_a/b/a_fold"/>
</dbReference>
<dbReference type="NCBIfam" id="TIGR00552">
    <property type="entry name" value="nadE"/>
    <property type="match status" value="1"/>
</dbReference>
<dbReference type="NCBIfam" id="NF001979">
    <property type="entry name" value="PRK00768.1"/>
    <property type="match status" value="1"/>
</dbReference>
<dbReference type="PANTHER" id="PTHR23090">
    <property type="entry name" value="NH 3 /GLUTAMINE-DEPENDENT NAD + SYNTHETASE"/>
    <property type="match status" value="1"/>
</dbReference>
<dbReference type="PANTHER" id="PTHR23090:SF7">
    <property type="entry name" value="NH(3)-DEPENDENT NAD(+) SYNTHETASE"/>
    <property type="match status" value="1"/>
</dbReference>
<dbReference type="Pfam" id="PF02540">
    <property type="entry name" value="NAD_synthase"/>
    <property type="match status" value="1"/>
</dbReference>
<dbReference type="SUPFAM" id="SSF52402">
    <property type="entry name" value="Adenine nucleotide alpha hydrolases-like"/>
    <property type="match status" value="1"/>
</dbReference>
<reference key="1">
    <citation type="journal article" date="2004" name="J. Mol. Microbiol. Biotechnol.">
        <title>The complete genome sequence of Bacillus licheniformis DSM13, an organism with great industrial potential.</title>
        <authorList>
            <person name="Veith B."/>
            <person name="Herzberg C."/>
            <person name="Steckel S."/>
            <person name="Feesche J."/>
            <person name="Maurer K.H."/>
            <person name="Ehrenreich P."/>
            <person name="Baeumer S."/>
            <person name="Henne A."/>
            <person name="Liesegang H."/>
            <person name="Merkl R."/>
            <person name="Ehrenreich A."/>
            <person name="Gottschalk G."/>
        </authorList>
    </citation>
    <scope>NUCLEOTIDE SEQUENCE [LARGE SCALE GENOMIC DNA]</scope>
    <source>
        <strain>ATCC 14580 / DSM 13 / JCM 2505 / CCUG 7422 / NBRC 12200 / NCIMB 9375 / NCTC 10341 / NRRL NRS-1264 / Gibson 46</strain>
    </source>
</reference>
<reference key="2">
    <citation type="journal article" date="2004" name="Genome Biol.">
        <title>Complete genome sequence of the industrial bacterium Bacillus licheniformis and comparisons with closely related Bacillus species.</title>
        <authorList>
            <person name="Rey M.W."/>
            <person name="Ramaiya P."/>
            <person name="Nelson B.A."/>
            <person name="Brody-Karpin S.D."/>
            <person name="Zaretsky E.J."/>
            <person name="Tang M."/>
            <person name="Lopez de Leon A."/>
            <person name="Xiang H."/>
            <person name="Gusti V."/>
            <person name="Clausen I.G."/>
            <person name="Olsen P.B."/>
            <person name="Rasmussen M.D."/>
            <person name="Andersen J.T."/>
            <person name="Joergensen P.L."/>
            <person name="Larsen T.S."/>
            <person name="Sorokin A."/>
            <person name="Bolotin A."/>
            <person name="Lapidus A."/>
            <person name="Galleron N."/>
            <person name="Ehrlich S.D."/>
            <person name="Berka R.M."/>
        </authorList>
    </citation>
    <scope>NUCLEOTIDE SEQUENCE [LARGE SCALE GENOMIC DNA]</scope>
    <source>
        <strain>ATCC 14580 / DSM 13 / JCM 2505 / CCUG 7422 / NBRC 12200 / NCIMB 9375 / NCTC 10341 / NRRL NRS-1264 / Gibson 46</strain>
    </source>
</reference>
<comment type="function">
    <text evidence="1">Catalyzes the ATP-dependent amidation of deamido-NAD to form NAD. Uses ammonia as a nitrogen source.</text>
</comment>
<comment type="catalytic activity">
    <reaction evidence="1">
        <text>deamido-NAD(+) + NH4(+) + ATP = AMP + diphosphate + NAD(+) + H(+)</text>
        <dbReference type="Rhea" id="RHEA:21188"/>
        <dbReference type="ChEBI" id="CHEBI:15378"/>
        <dbReference type="ChEBI" id="CHEBI:28938"/>
        <dbReference type="ChEBI" id="CHEBI:30616"/>
        <dbReference type="ChEBI" id="CHEBI:33019"/>
        <dbReference type="ChEBI" id="CHEBI:57540"/>
        <dbReference type="ChEBI" id="CHEBI:58437"/>
        <dbReference type="ChEBI" id="CHEBI:456215"/>
        <dbReference type="EC" id="6.3.1.5"/>
    </reaction>
</comment>
<comment type="pathway">
    <text evidence="1">Cofactor biosynthesis; NAD(+) biosynthesis; NAD(+) from deamido-NAD(+) (ammonia route): step 1/1.</text>
</comment>
<comment type="subunit">
    <text evidence="1">Homodimer.</text>
</comment>
<comment type="similarity">
    <text evidence="1">Belongs to the NAD synthetase family.</text>
</comment>
<keyword id="KW-0067">ATP-binding</keyword>
<keyword id="KW-0436">Ligase</keyword>
<keyword id="KW-0460">Magnesium</keyword>
<keyword id="KW-0479">Metal-binding</keyword>
<keyword id="KW-0520">NAD</keyword>
<keyword id="KW-0547">Nucleotide-binding</keyword>
<keyword id="KW-1185">Reference proteome</keyword>
<name>NADE_BACLD</name>
<sequence length="272" mass="29997">MTLQEKIMQELNVKPSIEPKQEIEKRVGFLKSYLKKTGAKGFVLGISGGQDSTLAGRLAQLAVEELREEGIQAEFIAVRLPYGVQQDEDDAQLALKFIQPDKSFAFDIASTVGSFAAQYQSVTGEALADFHKGNVKARVRMITQYAIGGQNQLLVIGTDHAAEAVTGFFTKYGDGGADLLPLTGLTKRQGRSLLEELGAPERLYTKSPTADLLDEKPQQSDETELGLTYDNIDDYLEGKAVSSEVAEAIEKRYKASEHKRQVPASMFDDWWK</sequence>
<evidence type="ECO:0000255" key="1">
    <source>
        <dbReference type="HAMAP-Rule" id="MF_00193"/>
    </source>
</evidence>
<accession>Q65NN6</accession>
<accession>Q62Z34</accession>
<protein>
    <recommendedName>
        <fullName evidence="1">NH(3)-dependent NAD(+) synthetase</fullName>
        <ecNumber evidence="1">6.3.1.5</ecNumber>
    </recommendedName>
</protein>
<proteinExistence type="inferred from homology"/>
<feature type="chain" id="PRO_1000077537" description="NH(3)-dependent NAD(+) synthetase">
    <location>
        <begin position="1"/>
        <end position="272"/>
    </location>
</feature>
<feature type="binding site" evidence="1">
    <location>
        <begin position="45"/>
        <end position="52"/>
    </location>
    <ligand>
        <name>ATP</name>
        <dbReference type="ChEBI" id="CHEBI:30616"/>
    </ligand>
</feature>
<feature type="binding site" evidence="1">
    <location>
        <position position="51"/>
    </location>
    <ligand>
        <name>Mg(2+)</name>
        <dbReference type="ChEBI" id="CHEBI:18420"/>
    </ligand>
</feature>
<feature type="binding site" evidence="1">
    <location>
        <position position="138"/>
    </location>
    <ligand>
        <name>deamido-NAD(+)</name>
        <dbReference type="ChEBI" id="CHEBI:58437"/>
    </ligand>
</feature>
<feature type="binding site" evidence="1">
    <location>
        <position position="158"/>
    </location>
    <ligand>
        <name>ATP</name>
        <dbReference type="ChEBI" id="CHEBI:30616"/>
    </ligand>
</feature>
<feature type="binding site" evidence="1">
    <location>
        <position position="163"/>
    </location>
    <ligand>
        <name>Mg(2+)</name>
        <dbReference type="ChEBI" id="CHEBI:18420"/>
    </ligand>
</feature>
<feature type="binding site" evidence="1">
    <location>
        <position position="171"/>
    </location>
    <ligand>
        <name>deamido-NAD(+)</name>
        <dbReference type="ChEBI" id="CHEBI:58437"/>
    </ligand>
</feature>
<feature type="binding site" evidence="1">
    <location>
        <position position="178"/>
    </location>
    <ligand>
        <name>deamido-NAD(+)</name>
        <dbReference type="ChEBI" id="CHEBI:58437"/>
    </ligand>
</feature>
<feature type="binding site" evidence="1">
    <location>
        <position position="187"/>
    </location>
    <ligand>
        <name>ATP</name>
        <dbReference type="ChEBI" id="CHEBI:30616"/>
    </ligand>
</feature>
<feature type="binding site" evidence="1">
    <location>
        <position position="209"/>
    </location>
    <ligand>
        <name>ATP</name>
        <dbReference type="ChEBI" id="CHEBI:30616"/>
    </ligand>
</feature>
<feature type="binding site" evidence="1">
    <location>
        <begin position="258"/>
        <end position="259"/>
    </location>
    <ligand>
        <name>deamido-NAD(+)</name>
        <dbReference type="ChEBI" id="CHEBI:58437"/>
    </ligand>
</feature>
<gene>
    <name evidence="1" type="primary">nadE</name>
    <name type="ordered locus">BLi00370</name>
    <name type="ordered locus">BL01706</name>
</gene>
<organism>
    <name type="scientific">Bacillus licheniformis (strain ATCC 14580 / DSM 13 / JCM 2505 / CCUG 7422 / NBRC 12200 / NCIMB 9375 / NCTC 10341 / NRRL NRS-1264 / Gibson 46)</name>
    <dbReference type="NCBI Taxonomy" id="279010"/>
    <lineage>
        <taxon>Bacteria</taxon>
        <taxon>Bacillati</taxon>
        <taxon>Bacillota</taxon>
        <taxon>Bacilli</taxon>
        <taxon>Bacillales</taxon>
        <taxon>Bacillaceae</taxon>
        <taxon>Bacillus</taxon>
    </lineage>
</organism>